<evidence type="ECO:0000255" key="1">
    <source>
        <dbReference type="HAMAP-Rule" id="MF_00366"/>
    </source>
</evidence>
<evidence type="ECO:0000256" key="2">
    <source>
        <dbReference type="SAM" id="MobiDB-lite"/>
    </source>
</evidence>
<gene>
    <name evidence="1" type="primary">rpoZ</name>
    <name type="ordered locus">Nwi_1923</name>
</gene>
<sequence length="130" mass="14401">MARVTVEDCIDKVDNRFDLVLLAAHRARMISSGSQLTIDRDNDKNPVVALREIAEQTISPEDMREELVHSLQKFVEVDEPESDTVPLIGSAGASVDADDTEVAVERMTEEELLKGLEGLAPPEEQPEEDE</sequence>
<name>RPOZ_NITWN</name>
<reference key="1">
    <citation type="journal article" date="2006" name="Appl. Environ. Microbiol.">
        <title>Genome sequence of the chemolithoautotrophic nitrite-oxidizing bacterium Nitrobacter winogradskyi Nb-255.</title>
        <authorList>
            <person name="Starkenburg S.R."/>
            <person name="Chain P.S.G."/>
            <person name="Sayavedra-Soto L.A."/>
            <person name="Hauser L."/>
            <person name="Land M.L."/>
            <person name="Larimer F.W."/>
            <person name="Malfatti S.A."/>
            <person name="Klotz M.G."/>
            <person name="Bottomley P.J."/>
            <person name="Arp D.J."/>
            <person name="Hickey W.J."/>
        </authorList>
    </citation>
    <scope>NUCLEOTIDE SEQUENCE [LARGE SCALE GENOMIC DNA]</scope>
    <source>
        <strain>ATCC 25391 / DSM 10237 / CIP 104748 / NCIMB 11846 / Nb-255</strain>
    </source>
</reference>
<proteinExistence type="inferred from homology"/>
<organism>
    <name type="scientific">Nitrobacter winogradskyi (strain ATCC 25391 / DSM 10237 / CIP 104748 / NCIMB 11846 / Nb-255)</name>
    <dbReference type="NCBI Taxonomy" id="323098"/>
    <lineage>
        <taxon>Bacteria</taxon>
        <taxon>Pseudomonadati</taxon>
        <taxon>Pseudomonadota</taxon>
        <taxon>Alphaproteobacteria</taxon>
        <taxon>Hyphomicrobiales</taxon>
        <taxon>Nitrobacteraceae</taxon>
        <taxon>Nitrobacter</taxon>
    </lineage>
</organism>
<accession>Q3SRA8</accession>
<comment type="function">
    <text evidence="1">Promotes RNA polymerase assembly. Latches the N- and C-terminal regions of the beta' subunit thereby facilitating its interaction with the beta and alpha subunits.</text>
</comment>
<comment type="catalytic activity">
    <reaction evidence="1">
        <text>RNA(n) + a ribonucleoside 5'-triphosphate = RNA(n+1) + diphosphate</text>
        <dbReference type="Rhea" id="RHEA:21248"/>
        <dbReference type="Rhea" id="RHEA-COMP:14527"/>
        <dbReference type="Rhea" id="RHEA-COMP:17342"/>
        <dbReference type="ChEBI" id="CHEBI:33019"/>
        <dbReference type="ChEBI" id="CHEBI:61557"/>
        <dbReference type="ChEBI" id="CHEBI:140395"/>
        <dbReference type="EC" id="2.7.7.6"/>
    </reaction>
</comment>
<comment type="subunit">
    <text evidence="1">The RNAP catalytic core consists of 2 alpha, 1 beta, 1 beta' and 1 omega subunit. When a sigma factor is associated with the core the holoenzyme is formed, which can initiate transcription.</text>
</comment>
<comment type="similarity">
    <text evidence="1">Belongs to the RNA polymerase subunit omega family.</text>
</comment>
<feature type="chain" id="PRO_0000237478" description="DNA-directed RNA polymerase subunit omega">
    <location>
        <begin position="1"/>
        <end position="130"/>
    </location>
</feature>
<feature type="region of interest" description="Disordered" evidence="2">
    <location>
        <begin position="79"/>
        <end position="98"/>
    </location>
</feature>
<feature type="region of interest" description="Disordered" evidence="2">
    <location>
        <begin position="108"/>
        <end position="130"/>
    </location>
</feature>
<keyword id="KW-0240">DNA-directed RNA polymerase</keyword>
<keyword id="KW-0548">Nucleotidyltransferase</keyword>
<keyword id="KW-1185">Reference proteome</keyword>
<keyword id="KW-0804">Transcription</keyword>
<keyword id="KW-0808">Transferase</keyword>
<protein>
    <recommendedName>
        <fullName evidence="1">DNA-directed RNA polymerase subunit omega</fullName>
        <shortName evidence="1">RNAP omega subunit</shortName>
        <ecNumber evidence="1">2.7.7.6</ecNumber>
    </recommendedName>
    <alternativeName>
        <fullName evidence="1">RNA polymerase omega subunit</fullName>
    </alternativeName>
    <alternativeName>
        <fullName evidence="1">Transcriptase subunit omega</fullName>
    </alternativeName>
</protein>
<dbReference type="EC" id="2.7.7.6" evidence="1"/>
<dbReference type="EMBL" id="CP000115">
    <property type="protein sequence ID" value="ABA05183.1"/>
    <property type="molecule type" value="Genomic_DNA"/>
</dbReference>
<dbReference type="RefSeq" id="WP_011315179.1">
    <property type="nucleotide sequence ID" value="NC_007406.1"/>
</dbReference>
<dbReference type="SMR" id="Q3SRA8"/>
<dbReference type="STRING" id="323098.Nwi_1923"/>
<dbReference type="KEGG" id="nwi:Nwi_1923"/>
<dbReference type="eggNOG" id="COG1758">
    <property type="taxonomic scope" value="Bacteria"/>
</dbReference>
<dbReference type="HOGENOM" id="CLU_125406_2_0_5"/>
<dbReference type="OrthoDB" id="9796300at2"/>
<dbReference type="Proteomes" id="UP000002531">
    <property type="component" value="Chromosome"/>
</dbReference>
<dbReference type="GO" id="GO:0000428">
    <property type="term" value="C:DNA-directed RNA polymerase complex"/>
    <property type="evidence" value="ECO:0007669"/>
    <property type="project" value="UniProtKB-KW"/>
</dbReference>
<dbReference type="GO" id="GO:0003677">
    <property type="term" value="F:DNA binding"/>
    <property type="evidence" value="ECO:0007669"/>
    <property type="project" value="UniProtKB-UniRule"/>
</dbReference>
<dbReference type="GO" id="GO:0003899">
    <property type="term" value="F:DNA-directed RNA polymerase activity"/>
    <property type="evidence" value="ECO:0007669"/>
    <property type="project" value="UniProtKB-UniRule"/>
</dbReference>
<dbReference type="GO" id="GO:0006351">
    <property type="term" value="P:DNA-templated transcription"/>
    <property type="evidence" value="ECO:0007669"/>
    <property type="project" value="UniProtKB-UniRule"/>
</dbReference>
<dbReference type="Gene3D" id="3.90.940.10">
    <property type="match status" value="1"/>
</dbReference>
<dbReference type="HAMAP" id="MF_00366">
    <property type="entry name" value="RNApol_bact_RpoZ"/>
    <property type="match status" value="1"/>
</dbReference>
<dbReference type="InterPro" id="IPR003716">
    <property type="entry name" value="DNA-dir_RNA_pol_omega"/>
</dbReference>
<dbReference type="InterPro" id="IPR006110">
    <property type="entry name" value="Pol_omega/Rpo6/RPB6"/>
</dbReference>
<dbReference type="InterPro" id="IPR036161">
    <property type="entry name" value="RPB6/omega-like_sf"/>
</dbReference>
<dbReference type="NCBIfam" id="TIGR00690">
    <property type="entry name" value="rpoZ"/>
    <property type="match status" value="1"/>
</dbReference>
<dbReference type="PANTHER" id="PTHR34476">
    <property type="entry name" value="DNA-DIRECTED RNA POLYMERASE SUBUNIT OMEGA"/>
    <property type="match status" value="1"/>
</dbReference>
<dbReference type="PANTHER" id="PTHR34476:SF1">
    <property type="entry name" value="DNA-DIRECTED RNA POLYMERASE SUBUNIT OMEGA"/>
    <property type="match status" value="1"/>
</dbReference>
<dbReference type="Pfam" id="PF01192">
    <property type="entry name" value="RNA_pol_Rpb6"/>
    <property type="match status" value="1"/>
</dbReference>
<dbReference type="SMART" id="SM01409">
    <property type="entry name" value="RNA_pol_Rpb6"/>
    <property type="match status" value="1"/>
</dbReference>
<dbReference type="SUPFAM" id="SSF63562">
    <property type="entry name" value="RPB6/omega subunit-like"/>
    <property type="match status" value="1"/>
</dbReference>